<reference key="1">
    <citation type="journal article" date="2000" name="Nucleic Acids Res.">
        <title>Complete genome sequence of the alkaliphilic bacterium Bacillus halodurans and genomic sequence comparison with Bacillus subtilis.</title>
        <authorList>
            <person name="Takami H."/>
            <person name="Nakasone K."/>
            <person name="Takaki Y."/>
            <person name="Maeno G."/>
            <person name="Sasaki R."/>
            <person name="Masui N."/>
            <person name="Fuji F."/>
            <person name="Hirama C."/>
            <person name="Nakamura Y."/>
            <person name="Ogasawara N."/>
            <person name="Kuhara S."/>
            <person name="Horikoshi K."/>
        </authorList>
    </citation>
    <scope>NUCLEOTIDE SEQUENCE [LARGE SCALE GENOMIC DNA]</scope>
    <source>
        <strain>ATCC BAA-125 / DSM 18197 / FERM 7344 / JCM 9153 / C-125</strain>
    </source>
</reference>
<comment type="subcellular location">
    <subcellularLocation>
        <location evidence="2">Cell membrane</location>
        <topology evidence="2">Multi-pass membrane protein</topology>
    </subcellularLocation>
</comment>
<gene>
    <name type="ordered locus">BH0234</name>
</gene>
<proteinExistence type="predicted"/>
<accession>Q9KG78</accession>
<sequence length="65" mass="7108">MMERIQELLEQIVKWLIFTILLVASISLIVVYQQGYIAEALVARATPLAIVVGLSAIAAAIIVKK</sequence>
<name>Y234_HALH5</name>
<protein>
    <recommendedName>
        <fullName>Uncharacterized protein BH0234</fullName>
    </recommendedName>
</protein>
<keyword id="KW-1003">Cell membrane</keyword>
<keyword id="KW-0472">Membrane</keyword>
<keyword id="KW-1185">Reference proteome</keyword>
<keyword id="KW-0812">Transmembrane</keyword>
<keyword id="KW-1133">Transmembrane helix</keyword>
<feature type="chain" id="PRO_0000220728" description="Uncharacterized protein BH0234">
    <location>
        <begin position="1"/>
        <end position="65"/>
    </location>
</feature>
<feature type="transmembrane region" description="Helical" evidence="1">
    <location>
        <begin position="12"/>
        <end position="31"/>
    </location>
</feature>
<feature type="transmembrane region" description="Helical" evidence="1">
    <location>
        <begin position="41"/>
        <end position="63"/>
    </location>
</feature>
<dbReference type="EMBL" id="BA000004">
    <property type="protein sequence ID" value="BAB03953.1"/>
    <property type="molecule type" value="Genomic_DNA"/>
</dbReference>
<dbReference type="PIR" id="B83679">
    <property type="entry name" value="B83679"/>
</dbReference>
<dbReference type="RefSeq" id="WP_010896416.1">
    <property type="nucleotide sequence ID" value="NC_002570.2"/>
</dbReference>
<dbReference type="SMR" id="Q9KG78"/>
<dbReference type="STRING" id="272558.gene:10726074"/>
<dbReference type="KEGG" id="bha:BH0234"/>
<dbReference type="eggNOG" id="ENOG502ZIPC">
    <property type="taxonomic scope" value="Bacteria"/>
</dbReference>
<dbReference type="HOGENOM" id="CLU_206341_0_0_9"/>
<dbReference type="Proteomes" id="UP000001258">
    <property type="component" value="Chromosome"/>
</dbReference>
<dbReference type="GO" id="GO:0005886">
    <property type="term" value="C:plasma membrane"/>
    <property type="evidence" value="ECO:0007669"/>
    <property type="project" value="UniProtKB-SubCell"/>
</dbReference>
<evidence type="ECO:0000255" key="1"/>
<evidence type="ECO:0000305" key="2"/>
<organism>
    <name type="scientific">Halalkalibacterium halodurans (strain ATCC BAA-125 / DSM 18197 / FERM 7344 / JCM 9153 / C-125)</name>
    <name type="common">Bacillus halodurans</name>
    <dbReference type="NCBI Taxonomy" id="272558"/>
    <lineage>
        <taxon>Bacteria</taxon>
        <taxon>Bacillati</taxon>
        <taxon>Bacillota</taxon>
        <taxon>Bacilli</taxon>
        <taxon>Bacillales</taxon>
        <taxon>Bacillaceae</taxon>
        <taxon>Halalkalibacterium (ex Joshi et al. 2022)</taxon>
    </lineage>
</organism>